<keyword id="KW-0450">Lipoyl</keyword>
<comment type="function">
    <text evidence="1">The glycine cleavage system catalyzes the degradation of glycine. The H protein shuttles the methylamine group of glycine from the P protein to the T protein.</text>
</comment>
<comment type="cofactor">
    <cofactor evidence="1">
        <name>(R)-lipoate</name>
        <dbReference type="ChEBI" id="CHEBI:83088"/>
    </cofactor>
    <text evidence="1">Binds 1 lipoyl cofactor covalently.</text>
</comment>
<comment type="subunit">
    <text evidence="1">The glycine cleavage system is composed of four proteins: P, T, L and H.</text>
</comment>
<comment type="similarity">
    <text evidence="1">Belongs to the GcvH family.</text>
</comment>
<proteinExistence type="inferred from homology"/>
<evidence type="ECO:0000255" key="1">
    <source>
        <dbReference type="HAMAP-Rule" id="MF_00272"/>
    </source>
</evidence>
<evidence type="ECO:0000255" key="2">
    <source>
        <dbReference type="PROSITE-ProRule" id="PRU01066"/>
    </source>
</evidence>
<gene>
    <name evidence="1" type="primary">gcvH</name>
    <name type="ordered locus">MAE_32670</name>
</gene>
<organism>
    <name type="scientific">Microcystis aeruginosa (strain NIES-843 / IAM M-2473)</name>
    <dbReference type="NCBI Taxonomy" id="449447"/>
    <lineage>
        <taxon>Bacteria</taxon>
        <taxon>Bacillati</taxon>
        <taxon>Cyanobacteriota</taxon>
        <taxon>Cyanophyceae</taxon>
        <taxon>Oscillatoriophycideae</taxon>
        <taxon>Chroococcales</taxon>
        <taxon>Microcystaceae</taxon>
        <taxon>Microcystis</taxon>
    </lineage>
</organism>
<reference key="1">
    <citation type="journal article" date="2007" name="DNA Res.">
        <title>Complete genomic structure of the bloom-forming toxic cyanobacterium Microcystis aeruginosa NIES-843.</title>
        <authorList>
            <person name="Kaneko T."/>
            <person name="Nakajima N."/>
            <person name="Okamoto S."/>
            <person name="Suzuki I."/>
            <person name="Tanabe Y."/>
            <person name="Tamaoki M."/>
            <person name="Nakamura Y."/>
            <person name="Kasai F."/>
            <person name="Watanabe A."/>
            <person name="Kawashima K."/>
            <person name="Kishida Y."/>
            <person name="Ono A."/>
            <person name="Shimizu Y."/>
            <person name="Takahashi C."/>
            <person name="Minami C."/>
            <person name="Fujishiro T."/>
            <person name="Kohara M."/>
            <person name="Katoh M."/>
            <person name="Nakazaki N."/>
            <person name="Nakayama S."/>
            <person name="Yamada M."/>
            <person name="Tabata S."/>
            <person name="Watanabe M.M."/>
        </authorList>
    </citation>
    <scope>NUCLEOTIDE SEQUENCE [LARGE SCALE GENOMIC DNA]</scope>
    <source>
        <strain>NIES-843 / IAM M-247</strain>
    </source>
</reference>
<sequence length="131" mass="14325">MELEYPEDLRYLETHEYVRLEGEIATLGISAFAVDQLGDIVFLELPELGEALKVGSSFGTIESVKAVEDLYPPVSGTVVDRNQAMIDSPELIADDPHGEGWLLKVRVENPDTALADTLSASEYRTQVAGES</sequence>
<name>GCSH_MICAN</name>
<dbReference type="EMBL" id="AP009552">
    <property type="protein sequence ID" value="BAG03089.1"/>
    <property type="molecule type" value="Genomic_DNA"/>
</dbReference>
<dbReference type="RefSeq" id="WP_002798072.1">
    <property type="nucleotide sequence ID" value="NC_010296.1"/>
</dbReference>
<dbReference type="SMR" id="B0JLR5"/>
<dbReference type="STRING" id="449447.MAE_32670"/>
<dbReference type="PaxDb" id="449447-MAE_32670"/>
<dbReference type="EnsemblBacteria" id="BAG03089">
    <property type="protein sequence ID" value="BAG03089"/>
    <property type="gene ID" value="MAE_32670"/>
</dbReference>
<dbReference type="KEGG" id="mar:MAE_32670"/>
<dbReference type="eggNOG" id="COG0509">
    <property type="taxonomic scope" value="Bacteria"/>
</dbReference>
<dbReference type="HOGENOM" id="CLU_097408_2_2_3"/>
<dbReference type="BioCyc" id="MAER449447:MAE_RS14130-MONOMER"/>
<dbReference type="Proteomes" id="UP000001510">
    <property type="component" value="Chromosome"/>
</dbReference>
<dbReference type="GO" id="GO:0005829">
    <property type="term" value="C:cytosol"/>
    <property type="evidence" value="ECO:0007669"/>
    <property type="project" value="TreeGrafter"/>
</dbReference>
<dbReference type="GO" id="GO:0005960">
    <property type="term" value="C:glycine cleavage complex"/>
    <property type="evidence" value="ECO:0007669"/>
    <property type="project" value="InterPro"/>
</dbReference>
<dbReference type="GO" id="GO:0019464">
    <property type="term" value="P:glycine decarboxylation via glycine cleavage system"/>
    <property type="evidence" value="ECO:0007669"/>
    <property type="project" value="UniProtKB-UniRule"/>
</dbReference>
<dbReference type="CDD" id="cd06848">
    <property type="entry name" value="GCS_H"/>
    <property type="match status" value="1"/>
</dbReference>
<dbReference type="Gene3D" id="2.40.50.100">
    <property type="match status" value="1"/>
</dbReference>
<dbReference type="HAMAP" id="MF_00272">
    <property type="entry name" value="GcvH"/>
    <property type="match status" value="1"/>
</dbReference>
<dbReference type="InterPro" id="IPR003016">
    <property type="entry name" value="2-oxoA_DH_lipoyl-BS"/>
</dbReference>
<dbReference type="InterPro" id="IPR000089">
    <property type="entry name" value="Biotin_lipoyl"/>
</dbReference>
<dbReference type="InterPro" id="IPR002930">
    <property type="entry name" value="GCV_H"/>
</dbReference>
<dbReference type="InterPro" id="IPR033753">
    <property type="entry name" value="GCV_H/Fam206"/>
</dbReference>
<dbReference type="InterPro" id="IPR017453">
    <property type="entry name" value="GCV_H_sub"/>
</dbReference>
<dbReference type="InterPro" id="IPR011053">
    <property type="entry name" value="Single_hybrid_motif"/>
</dbReference>
<dbReference type="NCBIfam" id="TIGR00527">
    <property type="entry name" value="gcvH"/>
    <property type="match status" value="1"/>
</dbReference>
<dbReference type="NCBIfam" id="NF002270">
    <property type="entry name" value="PRK01202.1"/>
    <property type="match status" value="1"/>
</dbReference>
<dbReference type="PANTHER" id="PTHR11715">
    <property type="entry name" value="GLYCINE CLEAVAGE SYSTEM H PROTEIN"/>
    <property type="match status" value="1"/>
</dbReference>
<dbReference type="PANTHER" id="PTHR11715:SF3">
    <property type="entry name" value="GLYCINE CLEAVAGE SYSTEM H PROTEIN-RELATED"/>
    <property type="match status" value="1"/>
</dbReference>
<dbReference type="Pfam" id="PF01597">
    <property type="entry name" value="GCV_H"/>
    <property type="match status" value="1"/>
</dbReference>
<dbReference type="SUPFAM" id="SSF51230">
    <property type="entry name" value="Single hybrid motif"/>
    <property type="match status" value="1"/>
</dbReference>
<dbReference type="PROSITE" id="PS50968">
    <property type="entry name" value="BIOTINYL_LIPOYL"/>
    <property type="match status" value="1"/>
</dbReference>
<dbReference type="PROSITE" id="PS00189">
    <property type="entry name" value="LIPOYL"/>
    <property type="match status" value="1"/>
</dbReference>
<accession>B0JLR5</accession>
<protein>
    <recommendedName>
        <fullName evidence="1">Glycine cleavage system H protein</fullName>
    </recommendedName>
</protein>
<feature type="chain" id="PRO_1000078733" description="Glycine cleavage system H protein">
    <location>
        <begin position="1"/>
        <end position="131"/>
    </location>
</feature>
<feature type="domain" description="Lipoyl-binding" evidence="2">
    <location>
        <begin position="24"/>
        <end position="106"/>
    </location>
</feature>
<feature type="modified residue" description="N6-lipoyllysine" evidence="1">
    <location>
        <position position="65"/>
    </location>
</feature>